<organism>
    <name type="scientific">Cyanophora paradoxa</name>
    <dbReference type="NCBI Taxonomy" id="2762"/>
    <lineage>
        <taxon>Eukaryota</taxon>
        <taxon>Glaucocystophyceae</taxon>
        <taxon>Cyanophoraceae</taxon>
        <taxon>Cyanophora</taxon>
    </lineage>
</organism>
<reference key="1">
    <citation type="journal article" date="1995" name="Plant Mol. Biol. Rep.">
        <title>Nucleotide sequence of the cyanelle DNA from Cyanophora paradoxa.</title>
        <authorList>
            <person name="Stirewalt V.L."/>
            <person name="Michalowski C.B."/>
            <person name="Loeffelhardt W."/>
            <person name="Bohnert H.J."/>
            <person name="Bryant D.A."/>
        </authorList>
    </citation>
    <scope>NUCLEOTIDE SEQUENCE [LARGE SCALE GENOMIC DNA]</scope>
    <source>
        <strain>UTEX LB 555 / Pringsheim</strain>
    </source>
</reference>
<reference key="2">
    <citation type="book" date="1997" name="Eukaryotism and symbiosis">
        <title>The complete sequence of the cyanelle genome of Cyanophora paradoxa: the genetic complexity of a primitive plastid.</title>
        <editorList>
            <person name="Schenk H.E.A."/>
            <person name="Herrmann R."/>
            <person name="Jeon K.W."/>
            <person name="Mueller N.E."/>
            <person name="Schwemmler W."/>
        </editorList>
        <authorList>
            <person name="Loeffelhardt W."/>
            <person name="Stirewalt V.L."/>
            <person name="Michalowski C.B."/>
            <person name="Annarella M."/>
            <person name="Farley J.Y."/>
            <person name="Schluchter W.M."/>
            <person name="Chung S."/>
            <person name="Newmann-Spallart C."/>
            <person name="Steiner J.M."/>
            <person name="Jakowitsch J."/>
            <person name="Bohnert H.J."/>
            <person name="Bryant D.A."/>
        </authorList>
    </citation>
    <scope>NUCLEOTIDE SEQUENCE [LARGE SCALE GENOMIC DNA]</scope>
    <source>
        <strain>UTEX LB 555 / Pringsheim</strain>
    </source>
</reference>
<feature type="chain" id="PRO_0000061858" description="Cytochrome b6-f complex subunit 4">
    <location>
        <begin position="1"/>
        <end position="160"/>
    </location>
</feature>
<feature type="transmembrane region" description="Helical" evidence="2">
    <location>
        <begin position="36"/>
        <end position="56"/>
    </location>
</feature>
<feature type="transmembrane region" description="Helical" evidence="2">
    <location>
        <begin position="95"/>
        <end position="115"/>
    </location>
</feature>
<feature type="transmembrane region" description="Helical" evidence="2">
    <location>
        <begin position="131"/>
        <end position="151"/>
    </location>
</feature>
<sequence>MSILKKPDLNDPELRAKLAKGMGHNYYGEPAWPNDLLYIFPVVILGSIACCGGLAVLDPALIGEPADPFSTPLEILPEWYFFPVFQILRVIPNKLLGVVLMAAVPAGLIAVPFIENVNKFQNPFRRPVASAVFLFGTFVAIWLGIGATFPIDKSLTLGLF</sequence>
<keyword id="KW-0194">Cyanelle</keyword>
<keyword id="KW-0249">Electron transport</keyword>
<keyword id="KW-0472">Membrane</keyword>
<keyword id="KW-0602">Photosynthesis</keyword>
<keyword id="KW-0934">Plastid</keyword>
<keyword id="KW-0793">Thylakoid</keyword>
<keyword id="KW-0812">Transmembrane</keyword>
<keyword id="KW-1133">Transmembrane helix</keyword>
<keyword id="KW-0813">Transport</keyword>
<geneLocation type="cyanelle"/>
<comment type="function">
    <text evidence="2">Component of the cytochrome b6-f complex, which mediates electron transfer between photosystem II (PSII) and photosystem I (PSI), cyclic electron flow around PSI, and state transitions.</text>
</comment>
<comment type="subunit">
    <text evidence="1">The 4 large subunits of the cytochrome b6-f complex are cytochrome b6, subunit IV (17 kDa polypeptide, petD), cytochrome f and the Rieske protein, while the 4 small subunits are petG, petL, petM and petN. The complex functions as a dimer (By similarity).</text>
</comment>
<comment type="subcellular location">
    <subcellularLocation>
        <location evidence="1">Plastid</location>
        <location evidence="1">Cyanelle thylakoid membrane</location>
        <topology evidence="2">Multi-pass membrane protein</topology>
    </subcellularLocation>
</comment>
<comment type="similarity">
    <text evidence="2">Belongs to the cytochrome b family. PetD subfamily.</text>
</comment>
<gene>
    <name evidence="2" type="primary">petD</name>
</gene>
<name>PETD_CYAPA</name>
<dbReference type="EMBL" id="U30821">
    <property type="protein sequence ID" value="AAA81205.1"/>
    <property type="molecule type" value="Genomic_DNA"/>
</dbReference>
<dbReference type="PIR" id="T06862">
    <property type="entry name" value="T06862"/>
</dbReference>
<dbReference type="RefSeq" id="NP_043174.1">
    <property type="nucleotide sequence ID" value="NC_001675.1"/>
</dbReference>
<dbReference type="SMR" id="P48122"/>
<dbReference type="GeneID" id="801613"/>
<dbReference type="GO" id="GO:0033115">
    <property type="term" value="C:cyanelle thylakoid membrane"/>
    <property type="evidence" value="ECO:0007669"/>
    <property type="project" value="UniProtKB-SubCell"/>
</dbReference>
<dbReference type="GO" id="GO:0045158">
    <property type="term" value="F:electron transporter, transferring electrons within cytochrome b6/f complex of photosystem II activity"/>
    <property type="evidence" value="ECO:0007669"/>
    <property type="project" value="UniProtKB-UniRule"/>
</dbReference>
<dbReference type="GO" id="GO:0045156">
    <property type="term" value="F:electron transporter, transferring electrons within the cyclic electron transport pathway of photosynthesis activity"/>
    <property type="evidence" value="ECO:0007669"/>
    <property type="project" value="InterPro"/>
</dbReference>
<dbReference type="GO" id="GO:0016491">
    <property type="term" value="F:oxidoreductase activity"/>
    <property type="evidence" value="ECO:0007669"/>
    <property type="project" value="InterPro"/>
</dbReference>
<dbReference type="GO" id="GO:0009767">
    <property type="term" value="P:photosynthetic electron transport chain"/>
    <property type="evidence" value="ECO:0007669"/>
    <property type="project" value="InterPro"/>
</dbReference>
<dbReference type="CDD" id="cd00290">
    <property type="entry name" value="cytochrome_b_C"/>
    <property type="match status" value="1"/>
</dbReference>
<dbReference type="FunFam" id="1.10.287.980:FF:000001">
    <property type="entry name" value="Cytochrome b6-f complex subunit 4"/>
    <property type="match status" value="1"/>
</dbReference>
<dbReference type="FunFam" id="1.20.5.510:FF:000002">
    <property type="entry name" value="Cytochrome b6-f complex subunit 4"/>
    <property type="match status" value="1"/>
</dbReference>
<dbReference type="Gene3D" id="1.10.287.980">
    <property type="entry name" value="plastocyanin oxidoreductase"/>
    <property type="match status" value="1"/>
</dbReference>
<dbReference type="Gene3D" id="1.20.5.510">
    <property type="entry name" value="Single helix bin"/>
    <property type="match status" value="1"/>
</dbReference>
<dbReference type="HAMAP" id="MF_01344">
    <property type="entry name" value="Cytb6_f_subIV"/>
    <property type="match status" value="1"/>
</dbReference>
<dbReference type="InterPro" id="IPR005798">
    <property type="entry name" value="Cyt_b/b6_C"/>
</dbReference>
<dbReference type="InterPro" id="IPR036150">
    <property type="entry name" value="Cyt_b/b6_C_sf"/>
</dbReference>
<dbReference type="InterPro" id="IPR005870">
    <property type="entry name" value="Cyt_b6/f_cplx_suIV"/>
</dbReference>
<dbReference type="InterPro" id="IPR048260">
    <property type="entry name" value="Cytochrome_b_C_euk/bac"/>
</dbReference>
<dbReference type="NCBIfam" id="TIGR01156">
    <property type="entry name" value="cytb6_f_IV"/>
    <property type="match status" value="1"/>
</dbReference>
<dbReference type="PANTHER" id="PTHR19271">
    <property type="entry name" value="CYTOCHROME B"/>
    <property type="match status" value="1"/>
</dbReference>
<dbReference type="PANTHER" id="PTHR19271:SF40">
    <property type="entry name" value="CYTOCHROME B"/>
    <property type="match status" value="1"/>
</dbReference>
<dbReference type="Pfam" id="PF00032">
    <property type="entry name" value="Cytochrom_B_C"/>
    <property type="match status" value="1"/>
</dbReference>
<dbReference type="PIRSF" id="PIRSF000033">
    <property type="entry name" value="B6f_17K"/>
    <property type="match status" value="1"/>
</dbReference>
<dbReference type="SUPFAM" id="SSF81648">
    <property type="entry name" value="a domain/subunit of cytochrome bc1 complex (Ubiquinol-cytochrome c reductase)"/>
    <property type="match status" value="1"/>
</dbReference>
<dbReference type="PROSITE" id="PS51003">
    <property type="entry name" value="CYTB_CTER"/>
    <property type="match status" value="1"/>
</dbReference>
<evidence type="ECO:0000250" key="1"/>
<evidence type="ECO:0000255" key="2">
    <source>
        <dbReference type="HAMAP-Rule" id="MF_01344"/>
    </source>
</evidence>
<protein>
    <recommendedName>
        <fullName evidence="2">Cytochrome b6-f complex subunit 4</fullName>
    </recommendedName>
    <alternativeName>
        <fullName evidence="2">17 kDa polypeptide</fullName>
    </alternativeName>
</protein>
<proteinExistence type="inferred from homology"/>
<accession>P48122</accession>